<organism>
    <name type="scientific">Pithecopus azureus</name>
    <name type="common">Orange-legged monkey tree frog</name>
    <name type="synonym">Phyllomedusa azurea</name>
    <dbReference type="NCBI Taxonomy" id="2034991"/>
    <lineage>
        <taxon>Eukaryota</taxon>
        <taxon>Metazoa</taxon>
        <taxon>Chordata</taxon>
        <taxon>Craniata</taxon>
        <taxon>Vertebrata</taxon>
        <taxon>Euteleostomi</taxon>
        <taxon>Amphibia</taxon>
        <taxon>Batrachia</taxon>
        <taxon>Anura</taxon>
        <taxon>Neobatrachia</taxon>
        <taxon>Hyloidea</taxon>
        <taxon>Hylidae</taxon>
        <taxon>Phyllomedusinae</taxon>
        <taxon>Pithecopus</taxon>
    </lineage>
</organism>
<sequence>KPWERL</sequence>
<dbReference type="GO" id="GO:0005576">
    <property type="term" value="C:extracellular region"/>
    <property type="evidence" value="ECO:0007669"/>
    <property type="project" value="UniProtKB-SubCell"/>
</dbReference>
<dbReference type="GO" id="GO:0006952">
    <property type="term" value="P:defense response"/>
    <property type="evidence" value="ECO:0007669"/>
    <property type="project" value="UniProtKB-KW"/>
</dbReference>
<proteinExistence type="evidence at protein level"/>
<accession>P84947</accession>
<evidence type="ECO:0000255" key="1"/>
<evidence type="ECO:0000269" key="2">
    <source>
    </source>
</evidence>
<evidence type="ECO:0000305" key="3"/>
<protein>
    <recommendedName>
        <fullName>Tryptophyllin-T2-7</fullName>
        <shortName>Pha-T2-7</shortName>
    </recommendedName>
    <alternativeName>
        <fullName>Tryptophyllin-7</fullName>
    </alternativeName>
</protein>
<comment type="subcellular location">
    <subcellularLocation>
        <location evidence="2 3">Secreted</location>
    </subcellularLocation>
</comment>
<comment type="tissue specificity">
    <text evidence="2 3">Expressed by the skin glands.</text>
</comment>
<comment type="mass spectrometry"/>
<comment type="similarity">
    <text evidence="1">Belongs to the frog skin active peptide (FSAP) family. Tryptophillin subfamily.</text>
</comment>
<feature type="peptide" id="PRO_0000250415" description="Tryptophyllin-T2-7" evidence="3">
    <location>
        <begin position="1"/>
        <end position="6"/>
    </location>
</feature>
<feature type="modified residue" description="Leucine amide" evidence="2">
    <location>
        <position position="6"/>
    </location>
</feature>
<keyword id="KW-0027">Amidation</keyword>
<keyword id="KW-0878">Amphibian defense peptide</keyword>
<keyword id="KW-0903">Direct protein sequencing</keyword>
<keyword id="KW-0964">Secreted</keyword>
<name>TY27_PITAZ</name>
<reference evidence="3" key="1">
    <citation type="journal article" date="2007" name="J. Proteome Res.">
        <title>Amphibian skin secretomics: application of parallel quadrupole time-of-flight mass spectrometry and peptide precursor cDNA cloning to rapidly characterize the skin secretory peptidome of Phyllomedusa hypochondrialis azurea: discovery of a novel peptide family, the hyposins.</title>
        <authorList>
            <person name="Thompson A.H."/>
            <person name="Bjourson A.J."/>
            <person name="Orr D.F."/>
            <person name="Shaw C."/>
            <person name="McClean S."/>
        </authorList>
    </citation>
    <scope>PROTEIN SEQUENCE</scope>
    <scope>SUBCELLULAR LOCATION</scope>
    <scope>TISSUE SPECIFICITY</scope>
    <scope>MASS SPECTROMETRY</scope>
    <scope>AMIDATION AT LEU-6</scope>
    <source>
        <tissue evidence="3">Skin secretion</tissue>
    </source>
</reference>